<sequence length="79" mass="8705">MKNKAVLMLMALFLVAVTQVHGDPEPSYKARSCTAYGYFCMIPPRCRGTVVANHWCRARGHICCSSPSNVYGKNQLLAA</sequence>
<evidence type="ECO:0000255" key="1"/>
<evidence type="ECO:0000269" key="2">
    <source>
    </source>
</evidence>
<evidence type="ECO:0000303" key="3">
    <source>
    </source>
</evidence>
<evidence type="ECO:0000305" key="4"/>
<evidence type="ECO:0000305" key="5">
    <source>
    </source>
</evidence>
<evidence type="ECO:0000312" key="6">
    <source>
        <dbReference type="EMBL" id="AKS26291.1"/>
    </source>
</evidence>
<dbReference type="EMBL" id="KR350473">
    <property type="protein sequence ID" value="AKS26291.1"/>
    <property type="molecule type" value="mRNA"/>
</dbReference>
<dbReference type="GO" id="GO:0004867">
    <property type="term" value="F:serine-type endopeptidase inhibitor activity"/>
    <property type="evidence" value="ECO:0000314"/>
    <property type="project" value="UniProtKB"/>
</dbReference>
<dbReference type="GO" id="GO:0002376">
    <property type="term" value="P:immune system process"/>
    <property type="evidence" value="ECO:0007669"/>
    <property type="project" value="UniProtKB-KW"/>
</dbReference>
<reference evidence="6" key="1">
    <citation type="submission" date="2015-04" db="EMBL/GenBank/DDBJ databases">
        <title>Cloning and sequencing of protease inhibitor panulirin from the spiny lobster Panulirus argus, immune challenge and tissue dependent transcript regulation.</title>
        <authorList>
            <person name="Pacios-Michelena A."/>
            <person name="Crabbe K."/>
            <person name="Montero-Alejo V."/>
            <person name="Perdomo-Morales R."/>
            <person name="Vanden Broeck J."/>
        </authorList>
    </citation>
    <scope>NUCLEOTIDE SEQUENCE [MRNA]</scope>
</reference>
<reference evidence="4" key="2">
    <citation type="journal article" date="2013" name="J. Biol. Chem.">
        <title>The Trypsin Inhibitor Panulirin Regulates the Prophenoloxidase-activating System in the Spiny Lobster Panulirus argus.</title>
        <authorList>
            <person name="Perdomo-Morales R."/>
            <person name="Montero-Alejo V."/>
            <person name="Corzo G."/>
            <person name="Besada V."/>
            <person name="Vega-Hurtado Y."/>
            <person name="Gonzalez-Gonzalez Y."/>
            <person name="Perera E."/>
            <person name="Porto-Verdecia M."/>
        </authorList>
    </citation>
    <scope>PROTEIN SEQUENCE OF 27-74</scope>
    <scope>FUNCTION</scope>
    <scope>SUBUNIT</scope>
    <scope>TISSUE SPECIFICITY</scope>
    <scope>PRESENCE OF DISULFIDE BONDS</scope>
    <scope>MASS SPECTROMETRY</scope>
    <scope>IDENTIFICATION BY MASS SPECTROMETRY</scope>
    <scope>3D-STRUCTURE MODELING</scope>
    <source>
        <tissue evidence="2">Hemocyte</tissue>
    </source>
</reference>
<keyword id="KW-0903">Direct protein sequencing</keyword>
<keyword id="KW-1015">Disulfide bond</keyword>
<keyword id="KW-0391">Immunity</keyword>
<keyword id="KW-0646">Protease inhibitor</keyword>
<keyword id="KW-0722">Serine protease inhibitor</keyword>
<keyword id="KW-0732">Signal</keyword>
<comment type="function">
    <text evidence="2">Involved in the melanization cascade in response to lipopolysaccharide (LPS). In vitro, reversibly and competitively inhibits trypsin (Ki=8.6 nM) but not serine proteases chymotrypsin, elastase, subtilisin, thrombin and plasmin, cysteine peptidase papain or metallopeptidase carboxypeptidase A.</text>
</comment>
<comment type="subunit">
    <text evidence="2">Monomer.</text>
</comment>
<comment type="tissue specificity">
    <text evidence="2">Expressed in hemocytes (at protein level).</text>
</comment>
<comment type="PTM">
    <text evidence="2">Contains 3 disulfide bonds.</text>
</comment>
<comment type="mass spectrometry" mass="5367.1" method="Electrospray" evidence="2"/>
<accession>B3EWX6</accession>
<accession>A0A0K0WTK7</accession>
<accession>B3EWX7</accession>
<name>PNLN_PANAR</name>
<proteinExistence type="evidence at protein level"/>
<feature type="signal peptide" evidence="1">
    <location>
        <begin position="1"/>
        <end position="22"/>
    </location>
</feature>
<feature type="propeptide" id="PRO_0000445629" evidence="4">
    <location>
        <begin position="23"/>
        <end position="26"/>
    </location>
</feature>
<feature type="peptide" id="PRO_0000421238" description="Panulirin" evidence="2">
    <location>
        <begin position="27"/>
        <end position="74"/>
    </location>
</feature>
<feature type="propeptide" id="PRO_0000445630" evidence="4">
    <location>
        <begin position="75"/>
        <end position="79"/>
    </location>
</feature>
<feature type="disulfide bond" evidence="5">
    <location>
        <begin position="33"/>
        <end position="63"/>
    </location>
</feature>
<feature type="disulfide bond" evidence="5">
    <location>
        <begin position="40"/>
        <end position="56"/>
    </location>
</feature>
<feature type="disulfide bond" evidence="5">
    <location>
        <begin position="46"/>
        <end position="64"/>
    </location>
</feature>
<feature type="sequence conflict" description="In Ref. 1; AKS26291." evidence="4" ref="1">
    <original>K</original>
    <variation>Q</variation>
    <location>
        <position position="73"/>
    </location>
</feature>
<organism>
    <name type="scientific">Panulirus argus</name>
    <name type="common">Caribbean spiny lobster</name>
    <name type="synonym">Palinurus argus</name>
    <dbReference type="NCBI Taxonomy" id="6737"/>
    <lineage>
        <taxon>Eukaryota</taxon>
        <taxon>Metazoa</taxon>
        <taxon>Ecdysozoa</taxon>
        <taxon>Arthropoda</taxon>
        <taxon>Crustacea</taxon>
        <taxon>Multicrustacea</taxon>
        <taxon>Malacostraca</taxon>
        <taxon>Eumalacostraca</taxon>
        <taxon>Eucarida</taxon>
        <taxon>Decapoda</taxon>
        <taxon>Pleocyemata</taxon>
        <taxon>Achelata</taxon>
        <taxon>Palinuroidea</taxon>
        <taxon>Palinuridae</taxon>
        <taxon>Panulirus</taxon>
    </lineage>
</organism>
<protein>
    <recommendedName>
        <fullName evidence="3">Panulirin</fullName>
    </recommendedName>
</protein>